<gene>
    <name evidence="2" type="primary">Z</name>
</gene>
<feature type="initiator methionine" description="Removed; by host" evidence="2">
    <location>
        <position position="1"/>
    </location>
</feature>
<feature type="chain" id="PRO_0000361028" description="RING finger protein Z" evidence="2">
    <location>
        <begin position="2"/>
        <end position="95"/>
    </location>
</feature>
<feature type="zinc finger region" description="RING-type; atypical" evidence="2">
    <location>
        <begin position="38"/>
        <end position="74"/>
    </location>
</feature>
<feature type="short sequence motif" description="PTAP/PSAP motif" evidence="2">
    <location>
        <begin position="88"/>
        <end position="91"/>
    </location>
</feature>
<feature type="lipid moiety-binding region" description="N-myristoyl glycine; by host" evidence="2">
    <location>
        <position position="2"/>
    </location>
</feature>
<name>Z_BCNVU</name>
<evidence type="ECO:0000250" key="1">
    <source>
        <dbReference type="UniProtKB" id="P18541"/>
    </source>
</evidence>
<evidence type="ECO:0000255" key="2">
    <source>
        <dbReference type="HAMAP-Rule" id="MF_04087"/>
    </source>
</evidence>
<comment type="function">
    <text evidence="1 2">Plays a crucial role in virion assembly and budding. Expressed late in the virus life cycle, it acts as an inhibitor of viral transcription and RNA synthesis by interacting with the viral polymerase L. Presumably recruits the NP encapsidated genome to cellular membranes at budding sites via direct interaction with NP. Plays critical roles in the final steps of viral release by interacting with host TSG101, a member of the vacuolar protein-sorting pathway and using other cellular host proteins involved in vesicle formation pathway. The budding of the virus progeny occurs after association of protein Z with the viral glycoprotein complex SSP-GP1-GP2 at the cell periphery, step that requires myristoylation of protein Z. Also selectively represses protein production by associating with host eIF4E (By similarity). In cell-based minigenome assay, has an inhibitory effect on the ribonucleoprotein machinery (vRNP), which is responsible for the replication and transcription of the viral genome (By similarity).</text>
</comment>
<comment type="subunit">
    <text evidence="2">Interacts with protein NP; this interaction probably directs the encapsidated genome to budding sites. Interacts (via RING domain) with polymerase L; this interaction inhibits viral transcription and replication, Z partially blocks the product exit tunnel for the releasing nascent RNA product. Interacts with the glycoprotein complex; this interaction plays a role in virion budding. Interacts with host eIF4E; this interaction results in eIF4E reduced affinity for its substrate, the 5'-m7 G cap structure. Interacts (via late-budding domain) with host TSG101; this interaction is essential for budding and release of viral particles. Interacts with host RPLP0; this interaction may serve to load ribosome-like particles inside the virion. Interacts with host PML; this interaction induces PML bodies redistribution in the cytoplasm upon viral infection.</text>
</comment>
<comment type="subcellular location">
    <subcellularLocation>
        <location evidence="2">Virion</location>
    </subcellularLocation>
    <subcellularLocation>
        <location evidence="2">Host cytoplasm</location>
        <location evidence="2">Host perinuclear region</location>
    </subcellularLocation>
    <subcellularLocation>
        <location evidence="2">Host cell membrane</location>
        <topology evidence="2">Lipid-anchor</topology>
        <orientation evidence="2">Cytoplasmic side</orientation>
    </subcellularLocation>
    <text evidence="2">Mainly perinuclear. During budding, associates at the inner side of the plasma membrane of infected cells.</text>
</comment>
<comment type="domain">
    <text evidence="2">Late-budding domains (L domains) are short sequence motifs essential for viral particle budding. They recruit proteins of the host ESCRT machinery (Endosomal Sorting Complex Required for Transport) or ESCRT-associated proteins.</text>
</comment>
<comment type="PTM">
    <text evidence="1">Myristoylation is required for the role of RING finger protein Z in assembly and budding.</text>
</comment>
<comment type="similarity">
    <text>Belongs to the arenaviridae Z protein family.</text>
</comment>
<accession>A0PJ23</accession>
<proteinExistence type="inferred from homology"/>
<dbReference type="EMBL" id="AY924390">
    <property type="protein sequence ID" value="AAX99343.1"/>
    <property type="molecule type" value="Genomic_RNA"/>
</dbReference>
<dbReference type="RefSeq" id="YP_001649224.1">
    <property type="nucleotide sequence ID" value="NC_010255.1"/>
</dbReference>
<dbReference type="KEGG" id="vg:5848381"/>
<dbReference type="OrthoDB" id="23344at10239"/>
<dbReference type="Proteomes" id="UP000172257">
    <property type="component" value="Genome"/>
</dbReference>
<dbReference type="GO" id="GO:0044220">
    <property type="term" value="C:host cell perinuclear region of cytoplasm"/>
    <property type="evidence" value="ECO:0007669"/>
    <property type="project" value="UniProtKB-SubCell"/>
</dbReference>
<dbReference type="GO" id="GO:0020002">
    <property type="term" value="C:host cell plasma membrane"/>
    <property type="evidence" value="ECO:0007669"/>
    <property type="project" value="UniProtKB-SubCell"/>
</dbReference>
<dbReference type="GO" id="GO:0016020">
    <property type="term" value="C:membrane"/>
    <property type="evidence" value="ECO:0007669"/>
    <property type="project" value="UniProtKB-UniRule"/>
</dbReference>
<dbReference type="GO" id="GO:0044423">
    <property type="term" value="C:virion component"/>
    <property type="evidence" value="ECO:0007669"/>
    <property type="project" value="UniProtKB-UniRule"/>
</dbReference>
<dbReference type="GO" id="GO:0003723">
    <property type="term" value="F:RNA binding"/>
    <property type="evidence" value="ECO:0007669"/>
    <property type="project" value="UniProtKB-UniRule"/>
</dbReference>
<dbReference type="GO" id="GO:0008270">
    <property type="term" value="F:zinc ion binding"/>
    <property type="evidence" value="ECO:0007669"/>
    <property type="project" value="UniProtKB-UniRule"/>
</dbReference>
<dbReference type="GO" id="GO:0046761">
    <property type="term" value="P:viral budding from plasma membrane"/>
    <property type="evidence" value="ECO:0007669"/>
    <property type="project" value="UniProtKB-UniRule"/>
</dbReference>
<dbReference type="GO" id="GO:0039702">
    <property type="term" value="P:viral budding via host ESCRT complex"/>
    <property type="evidence" value="ECO:0007669"/>
    <property type="project" value="UniProtKB-UniRule"/>
</dbReference>
<dbReference type="Gene3D" id="3.30.160.310">
    <property type="match status" value="1"/>
</dbReference>
<dbReference type="HAMAP" id="MF_04087">
    <property type="entry name" value="ARENA_Z"/>
    <property type="match status" value="1"/>
</dbReference>
<dbReference type="InterPro" id="IPR024183">
    <property type="entry name" value="RING_finger_Z_arenaviridae"/>
</dbReference>
<dbReference type="InterPro" id="IPR038485">
    <property type="entry name" value="Z_RING-type_Znf_sf"/>
</dbReference>
<dbReference type="InterPro" id="IPR003224">
    <property type="entry name" value="Z_RING_Znf"/>
</dbReference>
<dbReference type="Pfam" id="PF03854">
    <property type="entry name" value="zf-P11"/>
    <property type="match status" value="1"/>
</dbReference>
<dbReference type="PIRSF" id="PIRSF004030">
    <property type="entry name" value="Z_ArenaV"/>
    <property type="match status" value="1"/>
</dbReference>
<dbReference type="SUPFAM" id="SSF57850">
    <property type="entry name" value="RING/U-box"/>
    <property type="match status" value="1"/>
</dbReference>
<reference key="1">
    <citation type="journal article" date="2007" name="Virology">
        <title>Principal host relationships and evolutionary history of the North American arenaviruses.</title>
        <authorList>
            <person name="Cajimat M.N."/>
            <person name="Milazzo M.L."/>
            <person name="Hess B.D."/>
            <person name="Rood M.P."/>
            <person name="Fulhorst C.F."/>
        </authorList>
    </citation>
    <scope>NUCLEOTIDE SEQUENCE [GENOMIC RNA]</scope>
</reference>
<protein>
    <recommendedName>
        <fullName evidence="2">RING finger protein Z</fullName>
        <shortName evidence="2">Protein Z</shortName>
    </recommendedName>
    <alternativeName>
        <fullName evidence="2">Zinc-binding protein</fullName>
    </alternativeName>
</protein>
<sequence>MGLRYSREVKQRYGEKELEGRIPITLDMPQTLYGRYNCKSCWFANKGLIKCSNHYLCLKCLTAMLSRSDYCGICGGILPKKLVFETTPSAPPYTP</sequence>
<organism>
    <name type="scientific">Bear Canyon mammarenavirus (isolate Mouse/United States/AV A0070039/2000)</name>
    <name type="common">BCNV</name>
    <dbReference type="NCBI Taxonomy" id="3052298"/>
    <lineage>
        <taxon>Viruses</taxon>
        <taxon>Riboviria</taxon>
        <taxon>Orthornavirae</taxon>
        <taxon>Negarnaviricota</taxon>
        <taxon>Polyploviricotina</taxon>
        <taxon>Ellioviricetes</taxon>
        <taxon>Bunyavirales</taxon>
        <taxon>Arenaviridae</taxon>
        <taxon>Mammarenavirus</taxon>
    </lineage>
</organism>
<keyword id="KW-1032">Host cell membrane</keyword>
<keyword id="KW-1035">Host cytoplasm</keyword>
<keyword id="KW-1043">Host membrane</keyword>
<keyword id="KW-0945">Host-virus interaction</keyword>
<keyword id="KW-0449">Lipoprotein</keyword>
<keyword id="KW-0472">Membrane</keyword>
<keyword id="KW-0479">Metal-binding</keyword>
<keyword id="KW-0519">Myristate</keyword>
<keyword id="KW-1198">Viral budding</keyword>
<keyword id="KW-1187">Viral budding via the host ESCRT complexes</keyword>
<keyword id="KW-1188">Viral release from host cell</keyword>
<keyword id="KW-0946">Virion</keyword>
<keyword id="KW-0862">Zinc</keyword>
<keyword id="KW-0863">Zinc-finger</keyword>
<organismHost>
    <name type="scientific">Peromyscus californicus</name>
    <name type="common">California mouse</name>
    <dbReference type="NCBI Taxonomy" id="42520"/>
</organismHost>